<protein>
    <recommendedName>
        <fullName>Probable alpha-galactosidase D</fullName>
        <ecNumber>3.2.1.22</ecNumber>
    </recommendedName>
    <alternativeName>
        <fullName>Melibiase D</fullName>
    </alternativeName>
</protein>
<sequence>MEFIVSLLLLSPALVAGSLHSRIDNGLARTPQMGWNSYNYYSCSPNEAIIRSNAKALVDLGLAELGYRYVTTDCGWSVADRLPNGTLTWNETLFPSGFPAMGEYLHELGLLFGVYGDSGTKLCGSPPDQVGSLYHEEQDAKTFAEWGADSLKYDNCYSDAATNYPNVNYEPSTSPRPRYEIMSSALARVGRPILFQICEWGIDFPALWAPALGNSWRIGNDIIPAWRSIFRTLNQAVPNTDFAGPGQWADLDMLYVGNGVFSLPEEQTHFSLWAILKSPLTIGAALKDDDTSISQASLEVLKQKDVIGFNQDALGVSASLKRRWSDEGYEVWSGPLSGNRTVVAVINWRNESRDLTLDLPDVGLQYAQVARNIWGKTVVRDVRTSYTAGVAGHGTILLELQGTLPSGLYPAKIFAKSTGQRSTFESIYAATTSANYELAITFSRPSTETVTITTSSGQTVSISGKSGRIALTAGSNTITIQHKTPIESIQITPPTGTYYANTVFNVTGSAKHTTCGSGCSPVGSKIGYLSPTSNAYTSISTTTAGSKYLAIDYINNEVAFSSSWGWGSNSRNLTVSVNDGAPVRLEVPLSGRHSELYSPGKGWWDTATLGVLTSGWKKGENKVVFGNEGGEDGFQTYAADFVGVRVLD</sequence>
<reference key="1">
    <citation type="journal article" date="2005" name="Nature">
        <title>Genomic sequence of the pathogenic and allergenic filamentous fungus Aspergillus fumigatus.</title>
        <authorList>
            <person name="Nierman W.C."/>
            <person name="Pain A."/>
            <person name="Anderson M.J."/>
            <person name="Wortman J.R."/>
            <person name="Kim H.S."/>
            <person name="Arroyo J."/>
            <person name="Berriman M."/>
            <person name="Abe K."/>
            <person name="Archer D.B."/>
            <person name="Bermejo C."/>
            <person name="Bennett J.W."/>
            <person name="Bowyer P."/>
            <person name="Chen D."/>
            <person name="Collins M."/>
            <person name="Coulsen R."/>
            <person name="Davies R."/>
            <person name="Dyer P.S."/>
            <person name="Farman M.L."/>
            <person name="Fedorova N."/>
            <person name="Fedorova N.D."/>
            <person name="Feldblyum T.V."/>
            <person name="Fischer R."/>
            <person name="Fosker N."/>
            <person name="Fraser A."/>
            <person name="Garcia J.L."/>
            <person name="Garcia M.J."/>
            <person name="Goble A."/>
            <person name="Goldman G.H."/>
            <person name="Gomi K."/>
            <person name="Griffith-Jones S."/>
            <person name="Gwilliam R."/>
            <person name="Haas B.J."/>
            <person name="Haas H."/>
            <person name="Harris D.E."/>
            <person name="Horiuchi H."/>
            <person name="Huang J."/>
            <person name="Humphray S."/>
            <person name="Jimenez J."/>
            <person name="Keller N."/>
            <person name="Khouri H."/>
            <person name="Kitamoto K."/>
            <person name="Kobayashi T."/>
            <person name="Konzack S."/>
            <person name="Kulkarni R."/>
            <person name="Kumagai T."/>
            <person name="Lafton A."/>
            <person name="Latge J.-P."/>
            <person name="Li W."/>
            <person name="Lord A."/>
            <person name="Lu C."/>
            <person name="Majoros W.H."/>
            <person name="May G.S."/>
            <person name="Miller B.L."/>
            <person name="Mohamoud Y."/>
            <person name="Molina M."/>
            <person name="Monod M."/>
            <person name="Mouyna I."/>
            <person name="Mulligan S."/>
            <person name="Murphy L.D."/>
            <person name="O'Neil S."/>
            <person name="Paulsen I."/>
            <person name="Penalva M.A."/>
            <person name="Pertea M."/>
            <person name="Price C."/>
            <person name="Pritchard B.L."/>
            <person name="Quail M.A."/>
            <person name="Rabbinowitsch E."/>
            <person name="Rawlins N."/>
            <person name="Rajandream M.A."/>
            <person name="Reichard U."/>
            <person name="Renauld H."/>
            <person name="Robson G.D."/>
            <person name="Rodriguez de Cordoba S."/>
            <person name="Rodriguez-Pena J.M."/>
            <person name="Ronning C.M."/>
            <person name="Rutter S."/>
            <person name="Salzberg S.L."/>
            <person name="Sanchez M."/>
            <person name="Sanchez-Ferrero J.C."/>
            <person name="Saunders D."/>
            <person name="Seeger K."/>
            <person name="Squares R."/>
            <person name="Squares S."/>
            <person name="Takeuchi M."/>
            <person name="Tekaia F."/>
            <person name="Turner G."/>
            <person name="Vazquez de Aldana C.R."/>
            <person name="Weidman J."/>
            <person name="White O."/>
            <person name="Woodward J.R."/>
            <person name="Yu J.-H."/>
            <person name="Fraser C.M."/>
            <person name="Galagan J.E."/>
            <person name="Asai K."/>
            <person name="Machida M."/>
            <person name="Hall N."/>
            <person name="Barrell B.G."/>
            <person name="Denning D.W."/>
        </authorList>
    </citation>
    <scope>NUCLEOTIDE SEQUENCE [LARGE SCALE GENOMIC DNA]</scope>
    <source>
        <strain>ATCC MYA-4609 / CBS 101355 / FGSC A1100 / Af293</strain>
    </source>
</reference>
<proteinExistence type="inferred from homology"/>
<comment type="function">
    <text evidence="1">Hydrolyzes a variety of simple alpha-D-galactoside as well as more complex molecules such as oligosaccharides and polysaccharides.</text>
</comment>
<comment type="catalytic activity">
    <reaction>
        <text>Hydrolysis of terminal, non-reducing alpha-D-galactose residues in alpha-D-galactosides, including galactose oligosaccharides, galactomannans and galactolipids.</text>
        <dbReference type="EC" id="3.2.1.22"/>
    </reaction>
</comment>
<comment type="subcellular location">
    <subcellularLocation>
        <location evidence="1">Secreted</location>
    </subcellularLocation>
</comment>
<comment type="similarity">
    <text evidence="3">Belongs to the glycosyl hydrolase 27 family.</text>
</comment>
<comment type="sequence caution" evidence="3">
    <conflict type="erroneous gene model prediction">
        <sequence resource="EMBL-CDS" id="EBA27184"/>
    </conflict>
</comment>
<gene>
    <name type="primary">aglD</name>
    <name type="ORF">AFUA_4G03585</name>
</gene>
<keyword id="KW-0119">Carbohydrate metabolism</keyword>
<keyword id="KW-1015">Disulfide bond</keyword>
<keyword id="KW-0325">Glycoprotein</keyword>
<keyword id="KW-0326">Glycosidase</keyword>
<keyword id="KW-0378">Hydrolase</keyword>
<keyword id="KW-0624">Polysaccharide degradation</keyword>
<keyword id="KW-1185">Reference proteome</keyword>
<keyword id="KW-0964">Secreted</keyword>
<keyword id="KW-0732">Signal</keyword>
<accession>A4DA70</accession>
<organism>
    <name type="scientific">Aspergillus fumigatus (strain ATCC MYA-4609 / CBS 101355 / FGSC A1100 / Af293)</name>
    <name type="common">Neosartorya fumigata</name>
    <dbReference type="NCBI Taxonomy" id="330879"/>
    <lineage>
        <taxon>Eukaryota</taxon>
        <taxon>Fungi</taxon>
        <taxon>Dikarya</taxon>
        <taxon>Ascomycota</taxon>
        <taxon>Pezizomycotina</taxon>
        <taxon>Eurotiomycetes</taxon>
        <taxon>Eurotiomycetidae</taxon>
        <taxon>Eurotiales</taxon>
        <taxon>Aspergillaceae</taxon>
        <taxon>Aspergillus</taxon>
        <taxon>Aspergillus subgen. Fumigati</taxon>
    </lineage>
</organism>
<name>AGALD_ASPFU</name>
<evidence type="ECO:0000250" key="1"/>
<evidence type="ECO:0000255" key="2"/>
<evidence type="ECO:0000305" key="3"/>
<feature type="signal peptide" evidence="2">
    <location>
        <begin position="1"/>
        <end position="16"/>
    </location>
</feature>
<feature type="chain" id="PRO_0000395072" description="Probable alpha-galactosidase D">
    <location>
        <begin position="17"/>
        <end position="648"/>
    </location>
</feature>
<feature type="active site" description="Nucleophile" evidence="1">
    <location>
        <position position="154"/>
    </location>
</feature>
<feature type="active site" description="Proton donor" evidence="1">
    <location>
        <position position="221"/>
    </location>
</feature>
<feature type="binding site" evidence="1">
    <location>
        <begin position="199"/>
        <end position="203"/>
    </location>
    <ligand>
        <name>substrate</name>
    </ligand>
</feature>
<feature type="glycosylation site" description="N-linked (GlcNAc...) asparagine" evidence="2">
    <location>
        <position position="84"/>
    </location>
</feature>
<feature type="glycosylation site" description="N-linked (GlcNAc...) asparagine" evidence="2">
    <location>
        <position position="90"/>
    </location>
</feature>
<feature type="glycosylation site" description="N-linked (GlcNAc...) asparagine" evidence="2">
    <location>
        <position position="339"/>
    </location>
</feature>
<feature type="glycosylation site" description="N-linked (GlcNAc...) asparagine" evidence="2">
    <location>
        <position position="350"/>
    </location>
</feature>
<feature type="glycosylation site" description="N-linked (GlcNAc...) asparagine" evidence="2">
    <location>
        <position position="505"/>
    </location>
</feature>
<feature type="glycosylation site" description="N-linked (GlcNAc...) asparagine" evidence="2">
    <location>
        <position position="572"/>
    </location>
</feature>
<feature type="disulfide bond" evidence="1">
    <location>
        <begin position="123"/>
        <end position="156"/>
    </location>
</feature>
<dbReference type="EC" id="3.2.1.22"/>
<dbReference type="EMBL" id="AAHF01000016">
    <property type="protein sequence ID" value="EBA27184.1"/>
    <property type="status" value="ALT_SEQ"/>
    <property type="molecule type" value="Genomic_DNA"/>
</dbReference>
<dbReference type="RefSeq" id="XP_001481538.1">
    <property type="nucleotide sequence ID" value="XM_001481488.1"/>
</dbReference>
<dbReference type="SMR" id="A4DA70"/>
<dbReference type="STRING" id="330879.A4DA70"/>
<dbReference type="GlyCosmos" id="A4DA70">
    <property type="glycosylation" value="6 sites, No reported glycans"/>
</dbReference>
<dbReference type="GeneID" id="5077090"/>
<dbReference type="KEGG" id="afm:AFUA_4G03585"/>
<dbReference type="eggNOG" id="KOG2366">
    <property type="taxonomic scope" value="Eukaryota"/>
</dbReference>
<dbReference type="HOGENOM" id="CLU_013093_3_0_1"/>
<dbReference type="InParanoid" id="A4DA70"/>
<dbReference type="OrthoDB" id="5795902at2759"/>
<dbReference type="Proteomes" id="UP000002530">
    <property type="component" value="Chromosome 4"/>
</dbReference>
<dbReference type="GO" id="GO:0005576">
    <property type="term" value="C:extracellular region"/>
    <property type="evidence" value="ECO:0007669"/>
    <property type="project" value="UniProtKB-SubCell"/>
</dbReference>
<dbReference type="GO" id="GO:0004557">
    <property type="term" value="F:alpha-galactosidase activity"/>
    <property type="evidence" value="ECO:0007669"/>
    <property type="project" value="UniProtKB-EC"/>
</dbReference>
<dbReference type="GO" id="GO:0000272">
    <property type="term" value="P:polysaccharide catabolic process"/>
    <property type="evidence" value="ECO:0007669"/>
    <property type="project" value="UniProtKB-KW"/>
</dbReference>
<dbReference type="CDD" id="cd04081">
    <property type="entry name" value="CBM35_galactosidase-like"/>
    <property type="match status" value="1"/>
</dbReference>
<dbReference type="CDD" id="cd14792">
    <property type="entry name" value="GH27"/>
    <property type="match status" value="1"/>
</dbReference>
<dbReference type="FunFam" id="2.60.40.1180:FF:000008">
    <property type="entry name" value="Alpha-galactosidase"/>
    <property type="match status" value="1"/>
</dbReference>
<dbReference type="FunFam" id="3.20.20.70:FF:000197">
    <property type="entry name" value="Alpha-galactosidase"/>
    <property type="match status" value="1"/>
</dbReference>
<dbReference type="FunFam" id="2.60.120.260:FF:000162">
    <property type="entry name" value="Probable alpha-galactosidase D"/>
    <property type="match status" value="1"/>
</dbReference>
<dbReference type="Gene3D" id="3.20.20.70">
    <property type="entry name" value="Aldolase class I"/>
    <property type="match status" value="1"/>
</dbReference>
<dbReference type="Gene3D" id="2.60.120.260">
    <property type="entry name" value="Galactose-binding domain-like"/>
    <property type="match status" value="1"/>
</dbReference>
<dbReference type="Gene3D" id="2.60.40.1180">
    <property type="entry name" value="Golgi alpha-mannosidase II"/>
    <property type="match status" value="1"/>
</dbReference>
<dbReference type="InterPro" id="IPR013785">
    <property type="entry name" value="Aldolase_TIM"/>
</dbReference>
<dbReference type="InterPro" id="IPR002241">
    <property type="entry name" value="Glyco_hydro_27"/>
</dbReference>
<dbReference type="InterPro" id="IPR013780">
    <property type="entry name" value="Glyco_hydro_b"/>
</dbReference>
<dbReference type="InterPro" id="IPR017853">
    <property type="entry name" value="Glycoside_hydrolase_SF"/>
</dbReference>
<dbReference type="InterPro" id="IPR041233">
    <property type="entry name" value="Melibiase_C"/>
</dbReference>
<dbReference type="PANTHER" id="PTHR11452:SF75">
    <property type="entry name" value="ALPHA-GALACTOSIDASE MEL1"/>
    <property type="match status" value="1"/>
</dbReference>
<dbReference type="PANTHER" id="PTHR11452">
    <property type="entry name" value="ALPHA-GALACTOSIDASE/ALPHA-N-ACETYLGALACTOSAMINIDASE"/>
    <property type="match status" value="1"/>
</dbReference>
<dbReference type="Pfam" id="PF16499">
    <property type="entry name" value="Melibiase_2"/>
    <property type="match status" value="1"/>
</dbReference>
<dbReference type="Pfam" id="PF17801">
    <property type="entry name" value="Melibiase_C"/>
    <property type="match status" value="1"/>
</dbReference>
<dbReference type="PRINTS" id="PR00740">
    <property type="entry name" value="GLHYDRLASE27"/>
</dbReference>
<dbReference type="SUPFAM" id="SSF51445">
    <property type="entry name" value="(Trans)glycosidases"/>
    <property type="match status" value="1"/>
</dbReference>
<dbReference type="SUPFAM" id="SSF51011">
    <property type="entry name" value="Glycosyl hydrolase domain"/>
    <property type="match status" value="1"/>
</dbReference>